<comment type="function">
    <text evidence="1">Catalyzes the conversion of N-acetyl-diaminopimelate to diaminopimelate and acetate.</text>
</comment>
<comment type="catalytic activity">
    <reaction evidence="1">
        <text>N-acetyl-(2S,6S)-2,6-diaminopimelate + H2O = (2S,6S)-2,6-diaminopimelate + acetate</text>
        <dbReference type="Rhea" id="RHEA:20405"/>
        <dbReference type="ChEBI" id="CHEBI:15377"/>
        <dbReference type="ChEBI" id="CHEBI:30089"/>
        <dbReference type="ChEBI" id="CHEBI:57609"/>
        <dbReference type="ChEBI" id="CHEBI:58767"/>
        <dbReference type="EC" id="3.5.1.47"/>
    </reaction>
</comment>
<comment type="pathway">
    <text evidence="1">Amino-acid biosynthesis; L-lysine biosynthesis via DAP pathway; LL-2,6-diaminopimelate from (S)-tetrahydrodipicolinate (acetylase route): step 3/3.</text>
</comment>
<comment type="similarity">
    <text evidence="1">Belongs to the peptidase M20A family. N-acetyldiaminopimelate deacetylase subfamily.</text>
</comment>
<gene>
    <name type="ordered locus">SPT_2105</name>
</gene>
<accession>C1CTZ9</accession>
<reference key="1">
    <citation type="journal article" date="2010" name="Genome Biol.">
        <title>Structure and dynamics of the pan-genome of Streptococcus pneumoniae and closely related species.</title>
        <authorList>
            <person name="Donati C."/>
            <person name="Hiller N.L."/>
            <person name="Tettelin H."/>
            <person name="Muzzi A."/>
            <person name="Croucher N.J."/>
            <person name="Angiuoli S.V."/>
            <person name="Oggioni M."/>
            <person name="Dunning Hotopp J.C."/>
            <person name="Hu F.Z."/>
            <person name="Riley D.R."/>
            <person name="Covacci A."/>
            <person name="Mitchell T.J."/>
            <person name="Bentley S.D."/>
            <person name="Kilian M."/>
            <person name="Ehrlich G.D."/>
            <person name="Rappuoli R."/>
            <person name="Moxon E.R."/>
            <person name="Masignani V."/>
        </authorList>
    </citation>
    <scope>NUCLEOTIDE SEQUENCE [LARGE SCALE GENOMIC DNA]</scope>
    <source>
        <strain>Taiwan19F-14</strain>
    </source>
</reference>
<evidence type="ECO:0000255" key="1">
    <source>
        <dbReference type="HAMAP-Rule" id="MF_01692"/>
    </source>
</evidence>
<feature type="chain" id="PRO_1000187463" description="N-acetyldiaminopimelate deacetylase">
    <location>
        <begin position="1"/>
        <end position="376"/>
    </location>
</feature>
<feature type="active site" evidence="1">
    <location>
        <position position="69"/>
    </location>
</feature>
<feature type="active site" description="Proton acceptor" evidence="1">
    <location>
        <position position="128"/>
    </location>
</feature>
<protein>
    <recommendedName>
        <fullName evidence="1">N-acetyldiaminopimelate deacetylase</fullName>
        <ecNumber evidence="1">3.5.1.47</ecNumber>
    </recommendedName>
</protein>
<sequence length="376" mass="41592">MLDLIQTRRDLHQIPEIGLEEFKTQAYLLDVIEKLTTGKDFVQIRTWRTGILVYLQGSQPERTIGWRTDIDGLPIVEQTGLPFASQHQGRMHACGHDFHMTIALGCLERALEEQPKNNLLFLFQPAEENEAGGMLMYEAGAFGDWLPDQFYGLHVRPDLKVGQIATNTHTLFAGTCEVKIRFKGKGGHAAFPHEANDALVAASYFVTQVQSVVSRNVNPIEGAVVTFGVFQAGTTNNVITDTAFLHGTIRALTQDMSLLVQKRVKTVAEGIAAAFDMEVEVELKQGGYLPVENNPALARELMDFFDEKDGIELIDIEPAMTGEDFGYLLSKVDGVMFWLGIDSPYALHHPQMSPKEEVLAIGVAAVSSFLKKKAAE</sequence>
<keyword id="KW-0028">Amino-acid biosynthesis</keyword>
<keyword id="KW-0220">Diaminopimelate biosynthesis</keyword>
<keyword id="KW-0378">Hydrolase</keyword>
<keyword id="KW-0457">Lysine biosynthesis</keyword>
<organism>
    <name type="scientific">Streptococcus pneumoniae (strain Taiwan19F-14)</name>
    <dbReference type="NCBI Taxonomy" id="487213"/>
    <lineage>
        <taxon>Bacteria</taxon>
        <taxon>Bacillati</taxon>
        <taxon>Bacillota</taxon>
        <taxon>Bacilli</taxon>
        <taxon>Lactobacillales</taxon>
        <taxon>Streptococcaceae</taxon>
        <taxon>Streptococcus</taxon>
    </lineage>
</organism>
<dbReference type="EC" id="3.5.1.47" evidence="1"/>
<dbReference type="EMBL" id="CP000921">
    <property type="protein sequence ID" value="ACO22291.1"/>
    <property type="molecule type" value="Genomic_DNA"/>
</dbReference>
<dbReference type="RefSeq" id="WP_000885099.1">
    <property type="nucleotide sequence ID" value="NC_012469.1"/>
</dbReference>
<dbReference type="SMR" id="C1CTZ9"/>
<dbReference type="KEGG" id="snt:SPT_2105"/>
<dbReference type="HOGENOM" id="CLU_023257_0_1_9"/>
<dbReference type="UniPathway" id="UPA00034">
    <property type="reaction ID" value="UER00024"/>
</dbReference>
<dbReference type="GO" id="GO:0050118">
    <property type="term" value="F:N-acetyldiaminopimelate deacetylase activity"/>
    <property type="evidence" value="ECO:0007669"/>
    <property type="project" value="UniProtKB-UniRule"/>
</dbReference>
<dbReference type="GO" id="GO:0019877">
    <property type="term" value="P:diaminopimelate biosynthetic process"/>
    <property type="evidence" value="ECO:0007669"/>
    <property type="project" value="UniProtKB-UniRule"/>
</dbReference>
<dbReference type="GO" id="GO:0009089">
    <property type="term" value="P:lysine biosynthetic process via diaminopimelate"/>
    <property type="evidence" value="ECO:0007669"/>
    <property type="project" value="UniProtKB-UniRule"/>
</dbReference>
<dbReference type="CDD" id="cd05670">
    <property type="entry name" value="M20_Acy1_YkuR-like"/>
    <property type="match status" value="1"/>
</dbReference>
<dbReference type="FunFam" id="3.30.70.360:FF:000001">
    <property type="entry name" value="N-acetyldiaminopimelate deacetylase"/>
    <property type="match status" value="1"/>
</dbReference>
<dbReference type="Gene3D" id="3.30.70.360">
    <property type="match status" value="1"/>
</dbReference>
<dbReference type="Gene3D" id="3.40.630.10">
    <property type="entry name" value="Zn peptidases"/>
    <property type="match status" value="1"/>
</dbReference>
<dbReference type="HAMAP" id="MF_01692">
    <property type="entry name" value="DapEL"/>
    <property type="match status" value="1"/>
</dbReference>
<dbReference type="InterPro" id="IPR023905">
    <property type="entry name" value="AcetylDAP_deacetylase"/>
</dbReference>
<dbReference type="InterPro" id="IPR017439">
    <property type="entry name" value="Amidohydrolase"/>
</dbReference>
<dbReference type="InterPro" id="IPR036264">
    <property type="entry name" value="Bact_exopeptidase_dim_dom"/>
</dbReference>
<dbReference type="InterPro" id="IPR002933">
    <property type="entry name" value="Peptidase_M20"/>
</dbReference>
<dbReference type="InterPro" id="IPR011650">
    <property type="entry name" value="Peptidase_M20_dimer"/>
</dbReference>
<dbReference type="NCBIfam" id="TIGR01891">
    <property type="entry name" value="amidohydrolases"/>
    <property type="match status" value="1"/>
</dbReference>
<dbReference type="PANTHER" id="PTHR11014:SF98">
    <property type="entry name" value="N-ACETYLDIAMINOPIMELATE DEACETYLASE"/>
    <property type="match status" value="1"/>
</dbReference>
<dbReference type="PANTHER" id="PTHR11014">
    <property type="entry name" value="PEPTIDASE M20 FAMILY MEMBER"/>
    <property type="match status" value="1"/>
</dbReference>
<dbReference type="Pfam" id="PF07687">
    <property type="entry name" value="M20_dimer"/>
    <property type="match status" value="1"/>
</dbReference>
<dbReference type="Pfam" id="PF01546">
    <property type="entry name" value="Peptidase_M20"/>
    <property type="match status" value="1"/>
</dbReference>
<dbReference type="PIRSF" id="PIRSF005962">
    <property type="entry name" value="Pept_M20D_amidohydro"/>
    <property type="match status" value="1"/>
</dbReference>
<dbReference type="SUPFAM" id="SSF55031">
    <property type="entry name" value="Bacterial exopeptidase dimerisation domain"/>
    <property type="match status" value="1"/>
</dbReference>
<dbReference type="SUPFAM" id="SSF53187">
    <property type="entry name" value="Zn-dependent exopeptidases"/>
    <property type="match status" value="1"/>
</dbReference>
<name>DAPEL_STRZT</name>
<proteinExistence type="inferred from homology"/>